<gene>
    <name evidence="1" type="primary">aroK</name>
    <name type="ordered locus">MAE_21510</name>
</gene>
<evidence type="ECO:0000255" key="1">
    <source>
        <dbReference type="HAMAP-Rule" id="MF_00109"/>
    </source>
</evidence>
<accession>B0JFW8</accession>
<dbReference type="EC" id="2.7.1.71" evidence="1"/>
<dbReference type="EMBL" id="AP009552">
    <property type="protein sequence ID" value="BAG01973.1"/>
    <property type="molecule type" value="Genomic_DNA"/>
</dbReference>
<dbReference type="RefSeq" id="WP_012265361.1">
    <property type="nucleotide sequence ID" value="NC_010296.1"/>
</dbReference>
<dbReference type="SMR" id="B0JFW8"/>
<dbReference type="STRING" id="449447.MAE_21510"/>
<dbReference type="PaxDb" id="449447-MAE_21510"/>
<dbReference type="EnsemblBacteria" id="BAG01973">
    <property type="protein sequence ID" value="BAG01973"/>
    <property type="gene ID" value="MAE_21510"/>
</dbReference>
<dbReference type="KEGG" id="mar:MAE_21510"/>
<dbReference type="PATRIC" id="fig|449447.4.peg.1967"/>
<dbReference type="eggNOG" id="COG0703">
    <property type="taxonomic scope" value="Bacteria"/>
</dbReference>
<dbReference type="HOGENOM" id="CLU_057607_2_3_3"/>
<dbReference type="BioCyc" id="MAER449447:MAE_RS09385-MONOMER"/>
<dbReference type="UniPathway" id="UPA00053">
    <property type="reaction ID" value="UER00088"/>
</dbReference>
<dbReference type="Proteomes" id="UP000001510">
    <property type="component" value="Chromosome"/>
</dbReference>
<dbReference type="GO" id="GO:0005829">
    <property type="term" value="C:cytosol"/>
    <property type="evidence" value="ECO:0007669"/>
    <property type="project" value="TreeGrafter"/>
</dbReference>
<dbReference type="GO" id="GO:0005524">
    <property type="term" value="F:ATP binding"/>
    <property type="evidence" value="ECO:0007669"/>
    <property type="project" value="UniProtKB-UniRule"/>
</dbReference>
<dbReference type="GO" id="GO:0000287">
    <property type="term" value="F:magnesium ion binding"/>
    <property type="evidence" value="ECO:0007669"/>
    <property type="project" value="UniProtKB-UniRule"/>
</dbReference>
<dbReference type="GO" id="GO:0004765">
    <property type="term" value="F:shikimate kinase activity"/>
    <property type="evidence" value="ECO:0007669"/>
    <property type="project" value="UniProtKB-UniRule"/>
</dbReference>
<dbReference type="GO" id="GO:0008652">
    <property type="term" value="P:amino acid biosynthetic process"/>
    <property type="evidence" value="ECO:0007669"/>
    <property type="project" value="UniProtKB-KW"/>
</dbReference>
<dbReference type="GO" id="GO:0009073">
    <property type="term" value="P:aromatic amino acid family biosynthetic process"/>
    <property type="evidence" value="ECO:0007669"/>
    <property type="project" value="UniProtKB-KW"/>
</dbReference>
<dbReference type="GO" id="GO:0009423">
    <property type="term" value="P:chorismate biosynthetic process"/>
    <property type="evidence" value="ECO:0007669"/>
    <property type="project" value="UniProtKB-UniRule"/>
</dbReference>
<dbReference type="CDD" id="cd00464">
    <property type="entry name" value="SK"/>
    <property type="match status" value="1"/>
</dbReference>
<dbReference type="Gene3D" id="3.40.50.300">
    <property type="entry name" value="P-loop containing nucleotide triphosphate hydrolases"/>
    <property type="match status" value="1"/>
</dbReference>
<dbReference type="HAMAP" id="MF_00109">
    <property type="entry name" value="Shikimate_kinase"/>
    <property type="match status" value="1"/>
</dbReference>
<dbReference type="InterPro" id="IPR027417">
    <property type="entry name" value="P-loop_NTPase"/>
</dbReference>
<dbReference type="InterPro" id="IPR031322">
    <property type="entry name" value="Shikimate/glucono_kinase"/>
</dbReference>
<dbReference type="InterPro" id="IPR000623">
    <property type="entry name" value="Shikimate_kinase/TSH1"/>
</dbReference>
<dbReference type="InterPro" id="IPR023000">
    <property type="entry name" value="Shikimate_kinase_CS"/>
</dbReference>
<dbReference type="PANTHER" id="PTHR21087">
    <property type="entry name" value="SHIKIMATE KINASE"/>
    <property type="match status" value="1"/>
</dbReference>
<dbReference type="PANTHER" id="PTHR21087:SF16">
    <property type="entry name" value="SHIKIMATE KINASE 1, CHLOROPLASTIC"/>
    <property type="match status" value="1"/>
</dbReference>
<dbReference type="Pfam" id="PF01202">
    <property type="entry name" value="SKI"/>
    <property type="match status" value="1"/>
</dbReference>
<dbReference type="PRINTS" id="PR01100">
    <property type="entry name" value="SHIKIMTKNASE"/>
</dbReference>
<dbReference type="SUPFAM" id="SSF52540">
    <property type="entry name" value="P-loop containing nucleoside triphosphate hydrolases"/>
    <property type="match status" value="1"/>
</dbReference>
<dbReference type="PROSITE" id="PS01128">
    <property type="entry name" value="SHIKIMATE_KINASE"/>
    <property type="match status" value="1"/>
</dbReference>
<sequence length="190" mass="21576">MDNSTDFNSLRGLSVFLLGMMGSGKSTLGELLSRRLQYRFFDTDILIERVAGKKIREIFVDEGEATFRELETQVLAELSSLTKTVIATGGGMVLKPMNWSYLRHGLMIWLDVPLEILVKRLKQDTSRPLLQSTDLDSKLELLLEQRRGLYAEADLRIVVSDLDTPTDIVEKILTAIPTVIKDFHPERDHN</sequence>
<protein>
    <recommendedName>
        <fullName evidence="1">Shikimate kinase</fullName>
        <shortName evidence="1">SK</shortName>
        <ecNumber evidence="1">2.7.1.71</ecNumber>
    </recommendedName>
</protein>
<organism>
    <name type="scientific">Microcystis aeruginosa (strain NIES-843 / IAM M-2473)</name>
    <dbReference type="NCBI Taxonomy" id="449447"/>
    <lineage>
        <taxon>Bacteria</taxon>
        <taxon>Bacillati</taxon>
        <taxon>Cyanobacteriota</taxon>
        <taxon>Cyanophyceae</taxon>
        <taxon>Oscillatoriophycideae</taxon>
        <taxon>Chroococcales</taxon>
        <taxon>Microcystaceae</taxon>
        <taxon>Microcystis</taxon>
    </lineage>
</organism>
<name>AROK_MICAN</name>
<comment type="function">
    <text evidence="1">Catalyzes the specific phosphorylation of the 3-hydroxyl group of shikimic acid using ATP as a cosubstrate.</text>
</comment>
<comment type="catalytic activity">
    <reaction evidence="1">
        <text>shikimate + ATP = 3-phosphoshikimate + ADP + H(+)</text>
        <dbReference type="Rhea" id="RHEA:13121"/>
        <dbReference type="ChEBI" id="CHEBI:15378"/>
        <dbReference type="ChEBI" id="CHEBI:30616"/>
        <dbReference type="ChEBI" id="CHEBI:36208"/>
        <dbReference type="ChEBI" id="CHEBI:145989"/>
        <dbReference type="ChEBI" id="CHEBI:456216"/>
        <dbReference type="EC" id="2.7.1.71"/>
    </reaction>
</comment>
<comment type="cofactor">
    <cofactor evidence="1">
        <name>Mg(2+)</name>
        <dbReference type="ChEBI" id="CHEBI:18420"/>
    </cofactor>
    <text evidence="1">Binds 1 Mg(2+) ion per subunit.</text>
</comment>
<comment type="pathway">
    <text evidence="1">Metabolic intermediate biosynthesis; chorismate biosynthesis; chorismate from D-erythrose 4-phosphate and phosphoenolpyruvate: step 5/7.</text>
</comment>
<comment type="subunit">
    <text evidence="1">Monomer.</text>
</comment>
<comment type="subcellular location">
    <subcellularLocation>
        <location evidence="1">Cytoplasm</location>
    </subcellularLocation>
</comment>
<comment type="similarity">
    <text evidence="1">Belongs to the shikimate kinase family.</text>
</comment>
<keyword id="KW-0028">Amino-acid biosynthesis</keyword>
<keyword id="KW-0057">Aromatic amino acid biosynthesis</keyword>
<keyword id="KW-0067">ATP-binding</keyword>
<keyword id="KW-0963">Cytoplasm</keyword>
<keyword id="KW-0418">Kinase</keyword>
<keyword id="KW-0460">Magnesium</keyword>
<keyword id="KW-0479">Metal-binding</keyword>
<keyword id="KW-0547">Nucleotide-binding</keyword>
<keyword id="KW-0808">Transferase</keyword>
<proteinExistence type="inferred from homology"/>
<feature type="chain" id="PRO_1000094398" description="Shikimate kinase">
    <location>
        <begin position="1"/>
        <end position="190"/>
    </location>
</feature>
<feature type="binding site" evidence="1">
    <location>
        <begin position="22"/>
        <end position="27"/>
    </location>
    <ligand>
        <name>ATP</name>
        <dbReference type="ChEBI" id="CHEBI:30616"/>
    </ligand>
</feature>
<feature type="binding site" evidence="1">
    <location>
        <position position="26"/>
    </location>
    <ligand>
        <name>Mg(2+)</name>
        <dbReference type="ChEBI" id="CHEBI:18420"/>
    </ligand>
</feature>
<feature type="binding site" evidence="1">
    <location>
        <position position="44"/>
    </location>
    <ligand>
        <name>substrate</name>
    </ligand>
</feature>
<feature type="binding site" evidence="1">
    <location>
        <position position="68"/>
    </location>
    <ligand>
        <name>substrate</name>
    </ligand>
</feature>
<feature type="binding site" evidence="1">
    <location>
        <position position="90"/>
    </location>
    <ligand>
        <name>substrate</name>
    </ligand>
</feature>
<feature type="binding site" evidence="1">
    <location>
        <position position="127"/>
    </location>
    <ligand>
        <name>ATP</name>
        <dbReference type="ChEBI" id="CHEBI:30616"/>
    </ligand>
</feature>
<feature type="binding site" evidence="1">
    <location>
        <position position="146"/>
    </location>
    <ligand>
        <name>substrate</name>
    </ligand>
</feature>
<reference key="1">
    <citation type="journal article" date="2007" name="DNA Res.">
        <title>Complete genomic structure of the bloom-forming toxic cyanobacterium Microcystis aeruginosa NIES-843.</title>
        <authorList>
            <person name="Kaneko T."/>
            <person name="Nakajima N."/>
            <person name="Okamoto S."/>
            <person name="Suzuki I."/>
            <person name="Tanabe Y."/>
            <person name="Tamaoki M."/>
            <person name="Nakamura Y."/>
            <person name="Kasai F."/>
            <person name="Watanabe A."/>
            <person name="Kawashima K."/>
            <person name="Kishida Y."/>
            <person name="Ono A."/>
            <person name="Shimizu Y."/>
            <person name="Takahashi C."/>
            <person name="Minami C."/>
            <person name="Fujishiro T."/>
            <person name="Kohara M."/>
            <person name="Katoh M."/>
            <person name="Nakazaki N."/>
            <person name="Nakayama S."/>
            <person name="Yamada M."/>
            <person name="Tabata S."/>
            <person name="Watanabe M.M."/>
        </authorList>
    </citation>
    <scope>NUCLEOTIDE SEQUENCE [LARGE SCALE GENOMIC DNA]</scope>
    <source>
        <strain>NIES-843 / IAM M-247</strain>
    </source>
</reference>